<feature type="chain" id="PRO_1000214685" description="Large ribosomal subunit protein uL18">
    <location>
        <begin position="1"/>
        <end position="196"/>
    </location>
</feature>
<proteinExistence type="inferred from homology"/>
<organism>
    <name type="scientific">Saccharolobus islandicus (strain M.16.4 / Kamchatka #3)</name>
    <name type="common">Sulfolobus islandicus</name>
    <dbReference type="NCBI Taxonomy" id="426118"/>
    <lineage>
        <taxon>Archaea</taxon>
        <taxon>Thermoproteota</taxon>
        <taxon>Thermoprotei</taxon>
        <taxon>Sulfolobales</taxon>
        <taxon>Sulfolobaceae</taxon>
        <taxon>Saccharolobus</taxon>
    </lineage>
</organism>
<keyword id="KW-0687">Ribonucleoprotein</keyword>
<keyword id="KW-0689">Ribosomal protein</keyword>
<keyword id="KW-0694">RNA-binding</keyword>
<keyword id="KW-0699">rRNA-binding</keyword>
<protein>
    <recommendedName>
        <fullName evidence="1">Large ribosomal subunit protein uL18</fullName>
    </recommendedName>
    <alternativeName>
        <fullName evidence="2">50S ribosomal protein L18</fullName>
    </alternativeName>
</protein>
<evidence type="ECO:0000255" key="1">
    <source>
        <dbReference type="HAMAP-Rule" id="MF_01337"/>
    </source>
</evidence>
<evidence type="ECO:0000305" key="2"/>
<name>RL18_SACI6</name>
<gene>
    <name evidence="1" type="primary">rpl18</name>
    <name type="ordered locus">M164_1433</name>
</gene>
<dbReference type="EMBL" id="CP001402">
    <property type="protein sequence ID" value="ACR42039.1"/>
    <property type="molecule type" value="Genomic_DNA"/>
</dbReference>
<dbReference type="RefSeq" id="WP_012711437.1">
    <property type="nucleotide sequence ID" value="NC_012726.1"/>
</dbReference>
<dbReference type="SMR" id="C4KHH5"/>
<dbReference type="KEGG" id="sid:M164_1433"/>
<dbReference type="HOGENOM" id="CLU_056222_2_0_2"/>
<dbReference type="Proteomes" id="UP000001479">
    <property type="component" value="Chromosome"/>
</dbReference>
<dbReference type="GO" id="GO:0022625">
    <property type="term" value="C:cytosolic large ribosomal subunit"/>
    <property type="evidence" value="ECO:0007669"/>
    <property type="project" value="TreeGrafter"/>
</dbReference>
<dbReference type="GO" id="GO:0008097">
    <property type="term" value="F:5S rRNA binding"/>
    <property type="evidence" value="ECO:0007669"/>
    <property type="project" value="InterPro"/>
</dbReference>
<dbReference type="GO" id="GO:0003735">
    <property type="term" value="F:structural constituent of ribosome"/>
    <property type="evidence" value="ECO:0007669"/>
    <property type="project" value="InterPro"/>
</dbReference>
<dbReference type="GO" id="GO:0000027">
    <property type="term" value="P:ribosomal large subunit assembly"/>
    <property type="evidence" value="ECO:0007669"/>
    <property type="project" value="TreeGrafter"/>
</dbReference>
<dbReference type="GO" id="GO:0006412">
    <property type="term" value="P:translation"/>
    <property type="evidence" value="ECO:0007669"/>
    <property type="project" value="UniProtKB-UniRule"/>
</dbReference>
<dbReference type="CDD" id="cd00432">
    <property type="entry name" value="Ribosomal_L18_L5e"/>
    <property type="match status" value="1"/>
</dbReference>
<dbReference type="FunFam" id="3.30.420.100:FF:000008">
    <property type="entry name" value="50S ribosomal protein L18"/>
    <property type="match status" value="1"/>
</dbReference>
<dbReference type="Gene3D" id="3.30.420.100">
    <property type="match status" value="1"/>
</dbReference>
<dbReference type="HAMAP" id="MF_01337_A">
    <property type="entry name" value="Ribosomal_uL18_A"/>
    <property type="match status" value="1"/>
</dbReference>
<dbReference type="InterPro" id="IPR005485">
    <property type="entry name" value="Rbsml_uL18_euk"/>
</dbReference>
<dbReference type="NCBIfam" id="NF006342">
    <property type="entry name" value="PRK08569.1"/>
    <property type="match status" value="1"/>
</dbReference>
<dbReference type="PANTHER" id="PTHR23410:SF12">
    <property type="entry name" value="LARGE RIBOSOMAL SUBUNIT PROTEIN UL18"/>
    <property type="match status" value="1"/>
</dbReference>
<dbReference type="PANTHER" id="PTHR23410">
    <property type="entry name" value="RIBOSOMAL PROTEIN L5-RELATED"/>
    <property type="match status" value="1"/>
</dbReference>
<dbReference type="Pfam" id="PF17144">
    <property type="entry name" value="Ribosomal_L5e"/>
    <property type="match status" value="2"/>
</dbReference>
<dbReference type="SUPFAM" id="SSF53137">
    <property type="entry name" value="Translational machinery components"/>
    <property type="match status" value="1"/>
</dbReference>
<sequence>MANGPNYKIKPRRRREGKTNYYKRYVYVISKQIRFIVRITNKYVIVQIAKIDPKGDIMVASAHSSELTKKFEWKGDENNTPSAYLTGYLAALRAVKKGVTECVADIGLHVPSKGNKVFYAIKGAIDAGLKIPIGDISIENDRIKGEHIAKYAEKLKSENLDLYNKLFSRYLGRGLNPENLPSHFEEILNKIKSSGG</sequence>
<comment type="function">
    <text evidence="1">This is one of the proteins that bind and probably mediate the attachment of the 5S RNA into the large ribosomal subunit, where it forms part of the central protuberance.</text>
</comment>
<comment type="subunit">
    <text evidence="1">Part of the 50S ribosomal subunit. Contacts the 5S and 23S rRNAs.</text>
</comment>
<comment type="similarity">
    <text evidence="1">Belongs to the universal ribosomal protein uL18 family.</text>
</comment>
<reference key="1">
    <citation type="journal article" date="2009" name="Proc. Natl. Acad. Sci. U.S.A.">
        <title>Biogeography of the Sulfolobus islandicus pan-genome.</title>
        <authorList>
            <person name="Reno M.L."/>
            <person name="Held N.L."/>
            <person name="Fields C.J."/>
            <person name="Burke P.V."/>
            <person name="Whitaker R.J."/>
        </authorList>
    </citation>
    <scope>NUCLEOTIDE SEQUENCE [LARGE SCALE GENOMIC DNA]</scope>
    <source>
        <strain>M.16.4 / Kamchatka #3</strain>
    </source>
</reference>
<accession>C4KHH5</accession>